<keyword id="KW-0071">Autoinducer synthesis</keyword>
<keyword id="KW-0408">Iron</keyword>
<keyword id="KW-0456">Lyase</keyword>
<keyword id="KW-0479">Metal-binding</keyword>
<keyword id="KW-0673">Quorum sensing</keyword>
<accession>B5FSX3</accession>
<evidence type="ECO:0000255" key="1">
    <source>
        <dbReference type="HAMAP-Rule" id="MF_00091"/>
    </source>
</evidence>
<gene>
    <name evidence="1" type="primary">luxS</name>
    <name type="ordered locus">SeD_A3125</name>
</gene>
<organism>
    <name type="scientific">Salmonella dublin (strain CT_02021853)</name>
    <dbReference type="NCBI Taxonomy" id="439851"/>
    <lineage>
        <taxon>Bacteria</taxon>
        <taxon>Pseudomonadati</taxon>
        <taxon>Pseudomonadota</taxon>
        <taxon>Gammaproteobacteria</taxon>
        <taxon>Enterobacterales</taxon>
        <taxon>Enterobacteriaceae</taxon>
        <taxon>Salmonella</taxon>
    </lineage>
</organism>
<name>LUXS_SALDC</name>
<comment type="function">
    <text evidence="1">Involved in the synthesis of autoinducer 2 (AI-2) which is secreted by bacteria and is used to communicate both the cell density and the metabolic potential of the environment. The regulation of gene expression in response to changes in cell density is called quorum sensing. Catalyzes the transformation of S-ribosylhomocysteine (RHC) to homocysteine (HC) and 4,5-dihydroxy-2,3-pentadione (DPD).</text>
</comment>
<comment type="catalytic activity">
    <reaction evidence="1">
        <text>S-(5-deoxy-D-ribos-5-yl)-L-homocysteine = (S)-4,5-dihydroxypentane-2,3-dione + L-homocysteine</text>
        <dbReference type="Rhea" id="RHEA:17753"/>
        <dbReference type="ChEBI" id="CHEBI:29484"/>
        <dbReference type="ChEBI" id="CHEBI:58195"/>
        <dbReference type="ChEBI" id="CHEBI:58199"/>
        <dbReference type="EC" id="4.4.1.21"/>
    </reaction>
</comment>
<comment type="cofactor">
    <cofactor evidence="1">
        <name>Fe cation</name>
        <dbReference type="ChEBI" id="CHEBI:24875"/>
    </cofactor>
    <text evidence="1">Binds 1 Fe cation per subunit.</text>
</comment>
<comment type="subunit">
    <text evidence="1">Homodimer.</text>
</comment>
<comment type="similarity">
    <text evidence="1">Belongs to the LuxS family.</text>
</comment>
<reference key="1">
    <citation type="journal article" date="2011" name="J. Bacteriol.">
        <title>Comparative genomics of 28 Salmonella enterica isolates: evidence for CRISPR-mediated adaptive sublineage evolution.</title>
        <authorList>
            <person name="Fricke W.F."/>
            <person name="Mammel M.K."/>
            <person name="McDermott P.F."/>
            <person name="Tartera C."/>
            <person name="White D.G."/>
            <person name="Leclerc J.E."/>
            <person name="Ravel J."/>
            <person name="Cebula T.A."/>
        </authorList>
    </citation>
    <scope>NUCLEOTIDE SEQUENCE [LARGE SCALE GENOMIC DNA]</scope>
    <source>
        <strain>CT_02021853</strain>
    </source>
</reference>
<feature type="chain" id="PRO_1000093321" description="S-ribosylhomocysteine lyase">
    <location>
        <begin position="1"/>
        <end position="171"/>
    </location>
</feature>
<feature type="binding site" evidence="1">
    <location>
        <position position="54"/>
    </location>
    <ligand>
        <name>Fe cation</name>
        <dbReference type="ChEBI" id="CHEBI:24875"/>
    </ligand>
</feature>
<feature type="binding site" evidence="1">
    <location>
        <position position="58"/>
    </location>
    <ligand>
        <name>Fe cation</name>
        <dbReference type="ChEBI" id="CHEBI:24875"/>
    </ligand>
</feature>
<feature type="binding site" evidence="1">
    <location>
        <position position="128"/>
    </location>
    <ligand>
        <name>Fe cation</name>
        <dbReference type="ChEBI" id="CHEBI:24875"/>
    </ligand>
</feature>
<dbReference type="EC" id="4.4.1.21" evidence="1"/>
<dbReference type="EMBL" id="CP001144">
    <property type="protein sequence ID" value="ACH75407.1"/>
    <property type="molecule type" value="Genomic_DNA"/>
</dbReference>
<dbReference type="RefSeq" id="WP_001130194.1">
    <property type="nucleotide sequence ID" value="NC_011205.1"/>
</dbReference>
<dbReference type="SMR" id="B5FSX3"/>
<dbReference type="KEGG" id="sed:SeD_A3125"/>
<dbReference type="HOGENOM" id="CLU_107531_2_0_6"/>
<dbReference type="Proteomes" id="UP000008322">
    <property type="component" value="Chromosome"/>
</dbReference>
<dbReference type="GO" id="GO:0005506">
    <property type="term" value="F:iron ion binding"/>
    <property type="evidence" value="ECO:0007669"/>
    <property type="project" value="InterPro"/>
</dbReference>
<dbReference type="GO" id="GO:0043768">
    <property type="term" value="F:S-ribosylhomocysteine lyase activity"/>
    <property type="evidence" value="ECO:0007669"/>
    <property type="project" value="UniProtKB-UniRule"/>
</dbReference>
<dbReference type="GO" id="GO:0009372">
    <property type="term" value="P:quorum sensing"/>
    <property type="evidence" value="ECO:0007669"/>
    <property type="project" value="UniProtKB-UniRule"/>
</dbReference>
<dbReference type="FunFam" id="3.30.1360.80:FF:000001">
    <property type="entry name" value="S-ribosylhomocysteine lyase"/>
    <property type="match status" value="1"/>
</dbReference>
<dbReference type="Gene3D" id="3.30.1360.80">
    <property type="entry name" value="S-ribosylhomocysteinase (LuxS)"/>
    <property type="match status" value="1"/>
</dbReference>
<dbReference type="HAMAP" id="MF_00091">
    <property type="entry name" value="LuxS"/>
    <property type="match status" value="1"/>
</dbReference>
<dbReference type="InterPro" id="IPR037005">
    <property type="entry name" value="LuxS_sf"/>
</dbReference>
<dbReference type="InterPro" id="IPR011249">
    <property type="entry name" value="Metalloenz_LuxS/M16"/>
</dbReference>
<dbReference type="InterPro" id="IPR003815">
    <property type="entry name" value="S-ribosylhomocysteinase"/>
</dbReference>
<dbReference type="NCBIfam" id="NF002602">
    <property type="entry name" value="PRK02260.1-2"/>
    <property type="match status" value="1"/>
</dbReference>
<dbReference type="PANTHER" id="PTHR35799">
    <property type="entry name" value="S-RIBOSYLHOMOCYSTEINE LYASE"/>
    <property type="match status" value="1"/>
</dbReference>
<dbReference type="PANTHER" id="PTHR35799:SF1">
    <property type="entry name" value="S-RIBOSYLHOMOCYSTEINE LYASE"/>
    <property type="match status" value="1"/>
</dbReference>
<dbReference type="Pfam" id="PF02664">
    <property type="entry name" value="LuxS"/>
    <property type="match status" value="1"/>
</dbReference>
<dbReference type="PIRSF" id="PIRSF006160">
    <property type="entry name" value="AI2"/>
    <property type="match status" value="1"/>
</dbReference>
<dbReference type="PRINTS" id="PR01487">
    <property type="entry name" value="LUXSPROTEIN"/>
</dbReference>
<dbReference type="SUPFAM" id="SSF63411">
    <property type="entry name" value="LuxS/MPP-like metallohydrolase"/>
    <property type="match status" value="1"/>
</dbReference>
<protein>
    <recommendedName>
        <fullName evidence="1">S-ribosylhomocysteine lyase</fullName>
        <ecNumber evidence="1">4.4.1.21</ecNumber>
    </recommendedName>
    <alternativeName>
        <fullName evidence="1">AI-2 synthesis protein</fullName>
    </alternativeName>
    <alternativeName>
        <fullName evidence="1">Autoinducer-2 production protein LuxS</fullName>
    </alternativeName>
</protein>
<sequence length="171" mass="19308">MPLLDSFAVDHTRMQAPAVRVAKTMNTPHGDAITVFDLRFCIPNKEVMPEKGIHTLEHLFAGFMRDHLNGNGVEIIDISPMGCRTGFYMSLIGTPDEQRVADAWKAAMADVLKVQDQNQIPELNVYQCGTYQMHSLSEAQDIARHILERDVRVNSNKELALPKEKLQELHI</sequence>
<proteinExistence type="inferred from homology"/>